<organism>
    <name type="scientific">Dechloromonas aromatica (strain RCB)</name>
    <dbReference type="NCBI Taxonomy" id="159087"/>
    <lineage>
        <taxon>Bacteria</taxon>
        <taxon>Pseudomonadati</taxon>
        <taxon>Pseudomonadota</taxon>
        <taxon>Betaproteobacteria</taxon>
        <taxon>Rhodocyclales</taxon>
        <taxon>Azonexaceae</taxon>
        <taxon>Dechloromonas</taxon>
    </lineage>
</organism>
<sequence>MTDIGTLNFTWSQAIIGGFVAAGITDAVISPGSRSTPLALAMLRQAGLRCHIAIDERSAAFFGLGLAKSSHCPVLLLATSGTAPANWLPAVIEASQSGIPLILISADRPPELQDCGANQTVSQPGLFGSHTRASYTLGTPEPGFNPGYLHRVARQACEQASWPHPGPVHINQPFREPMLPSEPVLSGEMPEKISISHPDLQPDLNALGDLARRISGRPGIIVCGEMPSRDGQNEALVALATRLRSPIFAEPLSGLRFGPHDRSHLCVRYNDWLGKTDLVSQYRPEWVIRFGAYPVTRNLQKLVSEITETHALVDPWPRWIDPARRLTHLLRSEPAAICKALLDLSLVPFSETWLSALAKFEGNAEADEQRNHIHVLLEEVPDDTDLFVGNSLAIRQMDTHSGSADKTLRIYANRGASGIDGNISTAAGIAASRGRAVALIGDLTCQHDLGGLALAQGQNIVIIVVNNGGGGIFDHLPQRDLPEFTQGWRTPQNVNFEHAAMAFGLGYAATHSDDDLRPALRHAFAAGGPHLIELRQC</sequence>
<dbReference type="EC" id="2.2.1.9" evidence="1"/>
<dbReference type="EMBL" id="CP000089">
    <property type="protein sequence ID" value="AAZ47081.1"/>
    <property type="molecule type" value="Genomic_DNA"/>
</dbReference>
<dbReference type="SMR" id="Q47DK0"/>
<dbReference type="STRING" id="159087.Daro_2345"/>
<dbReference type="KEGG" id="dar:Daro_2345"/>
<dbReference type="eggNOG" id="COG1165">
    <property type="taxonomic scope" value="Bacteria"/>
</dbReference>
<dbReference type="HOGENOM" id="CLU_006051_3_0_4"/>
<dbReference type="OrthoDB" id="9791859at2"/>
<dbReference type="UniPathway" id="UPA00079"/>
<dbReference type="UniPathway" id="UPA01057">
    <property type="reaction ID" value="UER00164"/>
</dbReference>
<dbReference type="GO" id="GO:0070204">
    <property type="term" value="F:2-succinyl-5-enolpyruvyl-6-hydroxy-3-cyclohexene-1-carboxylic-acid synthase activity"/>
    <property type="evidence" value="ECO:0007669"/>
    <property type="project" value="UniProtKB-UniRule"/>
</dbReference>
<dbReference type="GO" id="GO:0000287">
    <property type="term" value="F:magnesium ion binding"/>
    <property type="evidence" value="ECO:0007669"/>
    <property type="project" value="UniProtKB-UniRule"/>
</dbReference>
<dbReference type="GO" id="GO:0030145">
    <property type="term" value="F:manganese ion binding"/>
    <property type="evidence" value="ECO:0007669"/>
    <property type="project" value="UniProtKB-UniRule"/>
</dbReference>
<dbReference type="GO" id="GO:0030976">
    <property type="term" value="F:thiamine pyrophosphate binding"/>
    <property type="evidence" value="ECO:0007669"/>
    <property type="project" value="UniProtKB-UniRule"/>
</dbReference>
<dbReference type="GO" id="GO:0009234">
    <property type="term" value="P:menaquinone biosynthetic process"/>
    <property type="evidence" value="ECO:0007669"/>
    <property type="project" value="UniProtKB-UniRule"/>
</dbReference>
<dbReference type="CDD" id="cd07037">
    <property type="entry name" value="TPP_PYR_MenD"/>
    <property type="match status" value="1"/>
</dbReference>
<dbReference type="CDD" id="cd02009">
    <property type="entry name" value="TPP_SHCHC_synthase"/>
    <property type="match status" value="1"/>
</dbReference>
<dbReference type="Gene3D" id="3.40.50.970">
    <property type="match status" value="2"/>
</dbReference>
<dbReference type="Gene3D" id="3.40.50.1220">
    <property type="entry name" value="TPP-binding domain"/>
    <property type="match status" value="1"/>
</dbReference>
<dbReference type="HAMAP" id="MF_01659">
    <property type="entry name" value="MenD"/>
    <property type="match status" value="1"/>
</dbReference>
<dbReference type="InterPro" id="IPR029035">
    <property type="entry name" value="DHS-like_NAD/FAD-binding_dom"/>
</dbReference>
<dbReference type="InterPro" id="IPR004433">
    <property type="entry name" value="MenaQ_synth_MenD"/>
</dbReference>
<dbReference type="InterPro" id="IPR029061">
    <property type="entry name" value="THDP-binding"/>
</dbReference>
<dbReference type="InterPro" id="IPR012001">
    <property type="entry name" value="Thiamin_PyroP_enz_TPP-bd_dom"/>
</dbReference>
<dbReference type="InterPro" id="IPR011766">
    <property type="entry name" value="TPP_enzyme_TPP-bd"/>
</dbReference>
<dbReference type="NCBIfam" id="TIGR00173">
    <property type="entry name" value="menD"/>
    <property type="match status" value="1"/>
</dbReference>
<dbReference type="PANTHER" id="PTHR42916">
    <property type="entry name" value="2-SUCCINYL-5-ENOLPYRUVYL-6-HYDROXY-3-CYCLOHEXENE-1-CARBOXYLATE SYNTHASE"/>
    <property type="match status" value="1"/>
</dbReference>
<dbReference type="PANTHER" id="PTHR42916:SF1">
    <property type="entry name" value="PROTEIN PHYLLO, CHLOROPLASTIC"/>
    <property type="match status" value="1"/>
</dbReference>
<dbReference type="Pfam" id="PF02775">
    <property type="entry name" value="TPP_enzyme_C"/>
    <property type="match status" value="1"/>
</dbReference>
<dbReference type="Pfam" id="PF02776">
    <property type="entry name" value="TPP_enzyme_N"/>
    <property type="match status" value="1"/>
</dbReference>
<dbReference type="PIRSF" id="PIRSF004983">
    <property type="entry name" value="MenD"/>
    <property type="match status" value="1"/>
</dbReference>
<dbReference type="SUPFAM" id="SSF52467">
    <property type="entry name" value="DHS-like NAD/FAD-binding domain"/>
    <property type="match status" value="1"/>
</dbReference>
<dbReference type="SUPFAM" id="SSF52518">
    <property type="entry name" value="Thiamin diphosphate-binding fold (THDP-binding)"/>
    <property type="match status" value="2"/>
</dbReference>
<keyword id="KW-0460">Magnesium</keyword>
<keyword id="KW-0464">Manganese</keyword>
<keyword id="KW-0474">Menaquinone biosynthesis</keyword>
<keyword id="KW-0479">Metal-binding</keyword>
<keyword id="KW-0786">Thiamine pyrophosphate</keyword>
<keyword id="KW-0808">Transferase</keyword>
<protein>
    <recommendedName>
        <fullName evidence="1">2-succinyl-5-enolpyruvyl-6-hydroxy-3-cyclohexene-1-carboxylate synthase</fullName>
        <shortName evidence="1">SEPHCHC synthase</shortName>
        <ecNumber evidence="1">2.2.1.9</ecNumber>
    </recommendedName>
    <alternativeName>
        <fullName evidence="1">Menaquinone biosynthesis protein MenD</fullName>
    </alternativeName>
</protein>
<name>MEND_DECAR</name>
<gene>
    <name evidence="1" type="primary">menD</name>
    <name type="ordered locus">Daro_2345</name>
</gene>
<proteinExistence type="inferred from homology"/>
<feature type="chain" id="PRO_0000341731" description="2-succinyl-5-enolpyruvyl-6-hydroxy-3-cyclohexene-1-carboxylate synthase">
    <location>
        <begin position="1"/>
        <end position="537"/>
    </location>
</feature>
<comment type="function">
    <text evidence="1">Catalyzes the thiamine diphosphate-dependent decarboxylation of 2-oxoglutarate and the subsequent addition of the resulting succinic semialdehyde-thiamine pyrophosphate anion to isochorismate to yield 2-succinyl-5-enolpyruvyl-6-hydroxy-3-cyclohexene-1-carboxylate (SEPHCHC).</text>
</comment>
<comment type="catalytic activity">
    <reaction evidence="1">
        <text>isochorismate + 2-oxoglutarate + H(+) = 5-enolpyruvoyl-6-hydroxy-2-succinyl-cyclohex-3-ene-1-carboxylate + CO2</text>
        <dbReference type="Rhea" id="RHEA:25593"/>
        <dbReference type="ChEBI" id="CHEBI:15378"/>
        <dbReference type="ChEBI" id="CHEBI:16526"/>
        <dbReference type="ChEBI" id="CHEBI:16810"/>
        <dbReference type="ChEBI" id="CHEBI:29780"/>
        <dbReference type="ChEBI" id="CHEBI:58818"/>
        <dbReference type="EC" id="2.2.1.9"/>
    </reaction>
</comment>
<comment type="cofactor">
    <cofactor evidence="1">
        <name>Mg(2+)</name>
        <dbReference type="ChEBI" id="CHEBI:18420"/>
    </cofactor>
    <cofactor evidence="1">
        <name>Mn(2+)</name>
        <dbReference type="ChEBI" id="CHEBI:29035"/>
    </cofactor>
</comment>
<comment type="cofactor">
    <cofactor evidence="1">
        <name>thiamine diphosphate</name>
        <dbReference type="ChEBI" id="CHEBI:58937"/>
    </cofactor>
    <text evidence="1">Binds 1 thiamine pyrophosphate per subunit.</text>
</comment>
<comment type="pathway">
    <text evidence="1">Quinol/quinone metabolism; 1,4-dihydroxy-2-naphthoate biosynthesis; 1,4-dihydroxy-2-naphthoate from chorismate: step 2/7.</text>
</comment>
<comment type="pathway">
    <text evidence="1">Quinol/quinone metabolism; menaquinone biosynthesis.</text>
</comment>
<comment type="subunit">
    <text evidence="1">Homodimer.</text>
</comment>
<comment type="similarity">
    <text evidence="1">Belongs to the TPP enzyme family. MenD subfamily.</text>
</comment>
<accession>Q47DK0</accession>
<evidence type="ECO:0000255" key="1">
    <source>
        <dbReference type="HAMAP-Rule" id="MF_01659"/>
    </source>
</evidence>
<reference key="1">
    <citation type="journal article" date="2009" name="BMC Genomics">
        <title>Metabolic analysis of the soil microbe Dechloromonas aromatica str. RCB: indications of a surprisingly complex life-style and cryptic anaerobic pathways for aromatic degradation.</title>
        <authorList>
            <person name="Salinero K.K."/>
            <person name="Keller K."/>
            <person name="Feil W.S."/>
            <person name="Feil H."/>
            <person name="Trong S."/>
            <person name="Di Bartolo G."/>
            <person name="Lapidus A."/>
        </authorList>
    </citation>
    <scope>NUCLEOTIDE SEQUENCE [LARGE SCALE GENOMIC DNA]</scope>
    <source>
        <strain>RCB</strain>
    </source>
</reference>